<protein>
    <recommendedName>
        <fullName evidence="1">Large ribosomal subunit protein bL34</fullName>
    </recommendedName>
    <alternativeName>
        <fullName evidence="3">50S ribosomal protein L34</fullName>
    </alternativeName>
</protein>
<sequence length="44" mass="5377">MKRTYQPSKIRRQRKHGFRHRMSTKNGRRVLASRRRKGRKVLSA</sequence>
<comment type="similarity">
    <text evidence="1">Belongs to the bacterial ribosomal protein bL34 family.</text>
</comment>
<gene>
    <name evidence="1" type="primary">rpmH</name>
    <name type="ordered locus">gbs1836</name>
</gene>
<reference key="1">
    <citation type="journal article" date="2002" name="Mol. Microbiol.">
        <title>Genome sequence of Streptococcus agalactiae, a pathogen causing invasive neonatal disease.</title>
        <authorList>
            <person name="Glaser P."/>
            <person name="Rusniok C."/>
            <person name="Buchrieser C."/>
            <person name="Chevalier F."/>
            <person name="Frangeul L."/>
            <person name="Msadek T."/>
            <person name="Zouine M."/>
            <person name="Couve E."/>
            <person name="Lalioui L."/>
            <person name="Poyart C."/>
            <person name="Trieu-Cuot P."/>
            <person name="Kunst F."/>
        </authorList>
    </citation>
    <scope>NUCLEOTIDE SEQUENCE [LARGE SCALE GENOMIC DNA]</scope>
    <source>
        <strain>NEM316</strain>
    </source>
</reference>
<proteinExistence type="inferred from homology"/>
<dbReference type="EMBL" id="AL766853">
    <property type="protein sequence ID" value="CAD47495.1"/>
    <property type="molecule type" value="Genomic_DNA"/>
</dbReference>
<dbReference type="RefSeq" id="WP_000831903.1">
    <property type="nucleotide sequence ID" value="NC_004368.1"/>
</dbReference>
<dbReference type="SMR" id="Q8E3C5"/>
<dbReference type="GeneID" id="98394107"/>
<dbReference type="KEGG" id="san:rpmH"/>
<dbReference type="eggNOG" id="COG0230">
    <property type="taxonomic scope" value="Bacteria"/>
</dbReference>
<dbReference type="HOGENOM" id="CLU_129938_2_0_9"/>
<dbReference type="Proteomes" id="UP000000823">
    <property type="component" value="Chromosome"/>
</dbReference>
<dbReference type="GO" id="GO:1990904">
    <property type="term" value="C:ribonucleoprotein complex"/>
    <property type="evidence" value="ECO:0007669"/>
    <property type="project" value="UniProtKB-KW"/>
</dbReference>
<dbReference type="GO" id="GO:0005840">
    <property type="term" value="C:ribosome"/>
    <property type="evidence" value="ECO:0007669"/>
    <property type="project" value="UniProtKB-KW"/>
</dbReference>
<dbReference type="GO" id="GO:0003735">
    <property type="term" value="F:structural constituent of ribosome"/>
    <property type="evidence" value="ECO:0007669"/>
    <property type="project" value="InterPro"/>
</dbReference>
<dbReference type="GO" id="GO:0006412">
    <property type="term" value="P:translation"/>
    <property type="evidence" value="ECO:0007669"/>
    <property type="project" value="UniProtKB-UniRule"/>
</dbReference>
<dbReference type="FunFam" id="1.10.287.3980:FF:000001">
    <property type="entry name" value="Mitochondrial ribosomal protein L34"/>
    <property type="match status" value="1"/>
</dbReference>
<dbReference type="Gene3D" id="1.10.287.3980">
    <property type="match status" value="1"/>
</dbReference>
<dbReference type="HAMAP" id="MF_00391">
    <property type="entry name" value="Ribosomal_bL34"/>
    <property type="match status" value="1"/>
</dbReference>
<dbReference type="InterPro" id="IPR000271">
    <property type="entry name" value="Ribosomal_bL34"/>
</dbReference>
<dbReference type="InterPro" id="IPR020939">
    <property type="entry name" value="Ribosomal_bL34_CS"/>
</dbReference>
<dbReference type="NCBIfam" id="TIGR01030">
    <property type="entry name" value="rpmH_bact"/>
    <property type="match status" value="1"/>
</dbReference>
<dbReference type="PANTHER" id="PTHR14503:SF4">
    <property type="entry name" value="LARGE RIBOSOMAL SUBUNIT PROTEIN BL34M"/>
    <property type="match status" value="1"/>
</dbReference>
<dbReference type="PANTHER" id="PTHR14503">
    <property type="entry name" value="MITOCHONDRIAL RIBOSOMAL PROTEIN 34 FAMILY MEMBER"/>
    <property type="match status" value="1"/>
</dbReference>
<dbReference type="Pfam" id="PF00468">
    <property type="entry name" value="Ribosomal_L34"/>
    <property type="match status" value="1"/>
</dbReference>
<dbReference type="PROSITE" id="PS00784">
    <property type="entry name" value="RIBOSOMAL_L34"/>
    <property type="match status" value="1"/>
</dbReference>
<evidence type="ECO:0000255" key="1">
    <source>
        <dbReference type="HAMAP-Rule" id="MF_00391"/>
    </source>
</evidence>
<evidence type="ECO:0000256" key="2">
    <source>
        <dbReference type="SAM" id="MobiDB-lite"/>
    </source>
</evidence>
<evidence type="ECO:0000305" key="3"/>
<organism>
    <name type="scientific">Streptococcus agalactiae serotype III (strain NEM316)</name>
    <dbReference type="NCBI Taxonomy" id="211110"/>
    <lineage>
        <taxon>Bacteria</taxon>
        <taxon>Bacillati</taxon>
        <taxon>Bacillota</taxon>
        <taxon>Bacilli</taxon>
        <taxon>Lactobacillales</taxon>
        <taxon>Streptococcaceae</taxon>
        <taxon>Streptococcus</taxon>
    </lineage>
</organism>
<name>RL34_STRA3</name>
<accession>Q8E3C5</accession>
<feature type="chain" id="PRO_0000187468" description="Large ribosomal subunit protein bL34">
    <location>
        <begin position="1"/>
        <end position="44"/>
    </location>
</feature>
<feature type="region of interest" description="Disordered" evidence="2">
    <location>
        <begin position="1"/>
        <end position="44"/>
    </location>
</feature>
<keyword id="KW-0687">Ribonucleoprotein</keyword>
<keyword id="KW-0689">Ribosomal protein</keyword>